<proteinExistence type="inferred from homology"/>
<accession>B5XZ19</accession>
<feature type="chain" id="PRO_1000137071" description="Acetylornithine deacetylase">
    <location>
        <begin position="1"/>
        <end position="383"/>
    </location>
</feature>
<feature type="active site" evidence="1">
    <location>
        <position position="82"/>
    </location>
</feature>
<feature type="active site" evidence="1">
    <location>
        <position position="144"/>
    </location>
</feature>
<feature type="binding site" evidence="1">
    <location>
        <position position="80"/>
    </location>
    <ligand>
        <name>Zn(2+)</name>
        <dbReference type="ChEBI" id="CHEBI:29105"/>
        <label>1</label>
    </ligand>
</feature>
<feature type="binding site" evidence="1">
    <location>
        <position position="112"/>
    </location>
    <ligand>
        <name>Zn(2+)</name>
        <dbReference type="ChEBI" id="CHEBI:29105"/>
        <label>1</label>
    </ligand>
</feature>
<feature type="binding site" evidence="1">
    <location>
        <position position="112"/>
    </location>
    <ligand>
        <name>Zn(2+)</name>
        <dbReference type="ChEBI" id="CHEBI:29105"/>
        <label>2</label>
    </ligand>
</feature>
<feature type="binding site" evidence="1">
    <location>
        <position position="145"/>
    </location>
    <ligand>
        <name>Zn(2+)</name>
        <dbReference type="ChEBI" id="CHEBI:29105"/>
        <label>2</label>
    </ligand>
</feature>
<feature type="binding site" evidence="1">
    <location>
        <position position="169"/>
    </location>
    <ligand>
        <name>Zn(2+)</name>
        <dbReference type="ChEBI" id="CHEBI:29105"/>
        <label>1</label>
    </ligand>
</feature>
<feature type="binding site" evidence="1">
    <location>
        <position position="355"/>
    </location>
    <ligand>
        <name>Zn(2+)</name>
        <dbReference type="ChEBI" id="CHEBI:29105"/>
        <label>2</label>
    </ligand>
</feature>
<dbReference type="EC" id="3.5.1.16" evidence="1"/>
<dbReference type="EMBL" id="CP000964">
    <property type="protein sequence ID" value="ACI07777.1"/>
    <property type="molecule type" value="Genomic_DNA"/>
</dbReference>
<dbReference type="SMR" id="B5XZ19"/>
<dbReference type="MEROPS" id="M20.974"/>
<dbReference type="KEGG" id="kpe:KPK_5435"/>
<dbReference type="HOGENOM" id="CLU_021802_2_4_6"/>
<dbReference type="UniPathway" id="UPA00068">
    <property type="reaction ID" value="UER00110"/>
</dbReference>
<dbReference type="Proteomes" id="UP000001734">
    <property type="component" value="Chromosome"/>
</dbReference>
<dbReference type="GO" id="GO:0005737">
    <property type="term" value="C:cytoplasm"/>
    <property type="evidence" value="ECO:0007669"/>
    <property type="project" value="UniProtKB-SubCell"/>
</dbReference>
<dbReference type="GO" id="GO:0008777">
    <property type="term" value="F:acetylornithine deacetylase activity"/>
    <property type="evidence" value="ECO:0007669"/>
    <property type="project" value="UniProtKB-UniRule"/>
</dbReference>
<dbReference type="GO" id="GO:0008270">
    <property type="term" value="F:zinc ion binding"/>
    <property type="evidence" value="ECO:0007669"/>
    <property type="project" value="UniProtKB-UniRule"/>
</dbReference>
<dbReference type="GO" id="GO:0006526">
    <property type="term" value="P:L-arginine biosynthetic process"/>
    <property type="evidence" value="ECO:0007669"/>
    <property type="project" value="UniProtKB-UniRule"/>
</dbReference>
<dbReference type="CDD" id="cd03894">
    <property type="entry name" value="M20_ArgE"/>
    <property type="match status" value="1"/>
</dbReference>
<dbReference type="FunFam" id="3.30.70.360:FF:000003">
    <property type="entry name" value="Acetylornithine deacetylase"/>
    <property type="match status" value="1"/>
</dbReference>
<dbReference type="Gene3D" id="3.30.70.360">
    <property type="match status" value="1"/>
</dbReference>
<dbReference type="Gene3D" id="3.40.630.10">
    <property type="entry name" value="Zn peptidases"/>
    <property type="match status" value="1"/>
</dbReference>
<dbReference type="HAMAP" id="MF_01108">
    <property type="entry name" value="ArgE"/>
    <property type="match status" value="1"/>
</dbReference>
<dbReference type="InterPro" id="IPR010169">
    <property type="entry name" value="AcOrn-deacetyl"/>
</dbReference>
<dbReference type="InterPro" id="IPR001261">
    <property type="entry name" value="ArgE/DapE_CS"/>
</dbReference>
<dbReference type="InterPro" id="IPR036264">
    <property type="entry name" value="Bact_exopeptidase_dim_dom"/>
</dbReference>
<dbReference type="InterPro" id="IPR002933">
    <property type="entry name" value="Peptidase_M20"/>
</dbReference>
<dbReference type="InterPro" id="IPR011650">
    <property type="entry name" value="Peptidase_M20_dimer"/>
</dbReference>
<dbReference type="InterPro" id="IPR050072">
    <property type="entry name" value="Peptidase_M20A"/>
</dbReference>
<dbReference type="NCBIfam" id="TIGR01892">
    <property type="entry name" value="AcOrn-deacetyl"/>
    <property type="match status" value="1"/>
</dbReference>
<dbReference type="NCBIfam" id="NF003474">
    <property type="entry name" value="PRK05111.1"/>
    <property type="match status" value="1"/>
</dbReference>
<dbReference type="PANTHER" id="PTHR43808">
    <property type="entry name" value="ACETYLORNITHINE DEACETYLASE"/>
    <property type="match status" value="1"/>
</dbReference>
<dbReference type="PANTHER" id="PTHR43808:SF1">
    <property type="entry name" value="ACETYLORNITHINE DEACETYLASE"/>
    <property type="match status" value="1"/>
</dbReference>
<dbReference type="Pfam" id="PF07687">
    <property type="entry name" value="M20_dimer"/>
    <property type="match status" value="1"/>
</dbReference>
<dbReference type="Pfam" id="PF01546">
    <property type="entry name" value="Peptidase_M20"/>
    <property type="match status" value="1"/>
</dbReference>
<dbReference type="SUPFAM" id="SSF55031">
    <property type="entry name" value="Bacterial exopeptidase dimerisation domain"/>
    <property type="match status" value="1"/>
</dbReference>
<dbReference type="SUPFAM" id="SSF53187">
    <property type="entry name" value="Zn-dependent exopeptidases"/>
    <property type="match status" value="1"/>
</dbReference>
<dbReference type="PROSITE" id="PS00758">
    <property type="entry name" value="ARGE_DAPE_CPG2_1"/>
    <property type="match status" value="1"/>
</dbReference>
<dbReference type="PROSITE" id="PS00759">
    <property type="entry name" value="ARGE_DAPE_CPG2_2"/>
    <property type="match status" value="1"/>
</dbReference>
<name>ARGE_KLEP3</name>
<comment type="function">
    <text evidence="1">Catalyzes the hydrolysis of the amide bond of N(2)-acetylated L-amino acids. Cleaves the acetyl group from N-acetyl-L-ornithine to form L-ornithine, an intermediate in L-arginine biosynthesis pathway, and a branchpoint in the synthesis of polyamines.</text>
</comment>
<comment type="catalytic activity">
    <reaction evidence="1">
        <text>N(2)-acetyl-L-ornithine + H2O = L-ornithine + acetate</text>
        <dbReference type="Rhea" id="RHEA:15941"/>
        <dbReference type="ChEBI" id="CHEBI:15377"/>
        <dbReference type="ChEBI" id="CHEBI:30089"/>
        <dbReference type="ChEBI" id="CHEBI:46911"/>
        <dbReference type="ChEBI" id="CHEBI:57805"/>
        <dbReference type="EC" id="3.5.1.16"/>
    </reaction>
</comment>
<comment type="cofactor">
    <cofactor evidence="1">
        <name>Zn(2+)</name>
        <dbReference type="ChEBI" id="CHEBI:29105"/>
    </cofactor>
    <cofactor evidence="1">
        <name>Co(2+)</name>
        <dbReference type="ChEBI" id="CHEBI:48828"/>
    </cofactor>
    <text evidence="1">Binds 2 Zn(2+) or Co(2+) ions per subunit.</text>
</comment>
<comment type="cofactor">
    <cofactor evidence="1">
        <name>glutathione</name>
        <dbReference type="ChEBI" id="CHEBI:57925"/>
    </cofactor>
</comment>
<comment type="pathway">
    <text evidence="1">Amino-acid biosynthesis; L-arginine biosynthesis; L-ornithine from N(2)-acetyl-L-ornithine (linear): step 1/1.</text>
</comment>
<comment type="subunit">
    <text evidence="1">Homodimer.</text>
</comment>
<comment type="subcellular location">
    <subcellularLocation>
        <location evidence="1">Cytoplasm</location>
    </subcellularLocation>
</comment>
<comment type="similarity">
    <text evidence="1">Belongs to the peptidase M20A family. ArgE subfamily.</text>
</comment>
<protein>
    <recommendedName>
        <fullName evidence="1">Acetylornithine deacetylase</fullName>
        <shortName evidence="1">AO</shortName>
        <shortName evidence="1">Acetylornithinase</shortName>
        <ecNumber evidence="1">3.5.1.16</ecNumber>
    </recommendedName>
    <alternativeName>
        <fullName evidence="1">N-acetylornithinase</fullName>
        <shortName evidence="1">NAO</shortName>
    </alternativeName>
</protein>
<keyword id="KW-0028">Amino-acid biosynthesis</keyword>
<keyword id="KW-0055">Arginine biosynthesis</keyword>
<keyword id="KW-0170">Cobalt</keyword>
<keyword id="KW-0963">Cytoplasm</keyword>
<keyword id="KW-0378">Hydrolase</keyword>
<keyword id="KW-0479">Metal-binding</keyword>
<keyword id="KW-0862">Zinc</keyword>
<organism>
    <name type="scientific">Klebsiella pneumoniae (strain 342)</name>
    <dbReference type="NCBI Taxonomy" id="507522"/>
    <lineage>
        <taxon>Bacteria</taxon>
        <taxon>Pseudomonadati</taxon>
        <taxon>Pseudomonadota</taxon>
        <taxon>Gammaproteobacteria</taxon>
        <taxon>Enterobacterales</taxon>
        <taxon>Enterobacteriaceae</taxon>
        <taxon>Klebsiella/Raoultella group</taxon>
        <taxon>Klebsiella</taxon>
        <taxon>Klebsiella pneumoniae complex</taxon>
    </lineage>
</organism>
<gene>
    <name evidence="1" type="primary">argE</name>
    <name type="ordered locus">KPK_5435</name>
</gene>
<evidence type="ECO:0000255" key="1">
    <source>
        <dbReference type="HAMAP-Rule" id="MF_01108"/>
    </source>
</evidence>
<reference key="1">
    <citation type="journal article" date="2008" name="PLoS Genet.">
        <title>Complete genome sequence of the N2-fixing broad host range endophyte Klebsiella pneumoniae 342 and virulence predictions verified in mice.</title>
        <authorList>
            <person name="Fouts D.E."/>
            <person name="Tyler H.L."/>
            <person name="DeBoy R.T."/>
            <person name="Daugherty S."/>
            <person name="Ren Q."/>
            <person name="Badger J.H."/>
            <person name="Durkin A.S."/>
            <person name="Huot H."/>
            <person name="Shrivastava S."/>
            <person name="Kothari S."/>
            <person name="Dodson R.J."/>
            <person name="Mohamoud Y."/>
            <person name="Khouri H."/>
            <person name="Roesch L.F.W."/>
            <person name="Krogfelt K.A."/>
            <person name="Struve C."/>
            <person name="Triplett E.W."/>
            <person name="Methe B.A."/>
        </authorList>
    </citation>
    <scope>NUCLEOTIDE SEQUENCE [LARGE SCALE GENOMIC DNA]</scope>
    <source>
        <strain>342</strain>
    </source>
</reference>
<sequence length="383" mass="42352">MKNNLPPFIEIYRALIATPSISATEEALDQSNESLINLLAGWFRDLGFNVEVQPVPDTRHKFNLLASTGHGAGGLLLAGHTDTVPFDDGRWTRDPFTLTEHDNKLYGLGTADMKGFFAFILDALRDVDVTTLKKPLYILATADEETSMAGARYFAETTQLRPDCAIIGEPTSLQPIRAHKGHMSNAIRIQGQSGHSSDPARGVNAIELMHDAIGRIMQLRDLLKERYHFEAFTVPYPTLNLGAIHGGDASNRICACCELHMDIRPLPGMTLNDLNGLLGEALAPVSERWPGRLTVSELHPPIPGYECPPDHKLVQVVEKLLGAQTDVVNYCTEAPFIQTLCPTLVLGPGSINQAHQPDEYLETRFIKPTRELISQVVHHFCWH</sequence>